<name>PETL_PHATC</name>
<proteinExistence type="inferred from homology"/>
<geneLocation type="chloroplast"/>
<dbReference type="EMBL" id="EF067920">
    <property type="protein sequence ID" value="ABK20590.1"/>
    <property type="molecule type" value="Genomic_DNA"/>
</dbReference>
<dbReference type="RefSeq" id="YP_874367.1">
    <property type="nucleotide sequence ID" value="NC_008588.1"/>
</dbReference>
<dbReference type="SMR" id="A0T0A1"/>
<dbReference type="GeneID" id="4524569"/>
<dbReference type="InParanoid" id="A0T0A1"/>
<dbReference type="Proteomes" id="UP000000759">
    <property type="component" value="Chloroplast"/>
</dbReference>
<dbReference type="GO" id="GO:0009535">
    <property type="term" value="C:chloroplast thylakoid membrane"/>
    <property type="evidence" value="ECO:0007669"/>
    <property type="project" value="UniProtKB-SubCell"/>
</dbReference>
<dbReference type="GO" id="GO:0009512">
    <property type="term" value="C:cytochrome b6f complex"/>
    <property type="evidence" value="ECO:0007669"/>
    <property type="project" value="InterPro"/>
</dbReference>
<dbReference type="GO" id="GO:0045158">
    <property type="term" value="F:electron transporter, transferring electrons within cytochrome b6/f complex of photosystem II activity"/>
    <property type="evidence" value="ECO:0007669"/>
    <property type="project" value="UniProtKB-UniRule"/>
</dbReference>
<dbReference type="GO" id="GO:0015979">
    <property type="term" value="P:photosynthesis"/>
    <property type="evidence" value="ECO:0007669"/>
    <property type="project" value="UniProtKB-KW"/>
</dbReference>
<dbReference type="HAMAP" id="MF_00433">
    <property type="entry name" value="Cytb6_f_PetL"/>
    <property type="match status" value="1"/>
</dbReference>
<dbReference type="InterPro" id="IPR007802">
    <property type="entry name" value="Cyt_b6/f_cplx_su6"/>
</dbReference>
<dbReference type="Pfam" id="PF05115">
    <property type="entry name" value="PetL"/>
    <property type="match status" value="1"/>
</dbReference>
<accession>A0T0A1</accession>
<protein>
    <recommendedName>
        <fullName evidence="1">Cytochrome b6-f complex subunit 6</fullName>
    </recommendedName>
    <alternativeName>
        <fullName evidence="1">Cytochrome b6-f complex subunit PetL</fullName>
    </alternativeName>
    <alternativeName>
        <fullName evidence="1">Cytochrome b6-f complex subunit VI</fullName>
    </alternativeName>
</protein>
<evidence type="ECO:0000255" key="1">
    <source>
        <dbReference type="HAMAP-Rule" id="MF_00433"/>
    </source>
</evidence>
<feature type="chain" id="PRO_0000275539" description="Cytochrome b6-f complex subunit 6">
    <location>
        <begin position="1"/>
        <end position="31"/>
    </location>
</feature>
<feature type="transmembrane region" description="Helical" evidence="1">
    <location>
        <begin position="3"/>
        <end position="23"/>
    </location>
</feature>
<reference key="1">
    <citation type="journal article" date="2007" name="Mol. Genet. Genomics">
        <title>Chloroplast genomes of the diatoms Phaeodactylum tricornutum and Thalassiosira pseudonana: comparison with other plastid genomes of the red lineage.</title>
        <authorList>
            <person name="Oudot-Le Secq M.-P."/>
            <person name="Grimwood J."/>
            <person name="Shapiro H."/>
            <person name="Armbrust E.V."/>
            <person name="Bowler C."/>
            <person name="Green B.R."/>
        </authorList>
    </citation>
    <scope>NUCLEOTIDE SEQUENCE [LARGE SCALE GENOMIC DNA]</scope>
    <source>
        <strain>CCAP 1055/1</strain>
    </source>
</reference>
<keyword id="KW-0150">Chloroplast</keyword>
<keyword id="KW-0249">Electron transport</keyword>
<keyword id="KW-0472">Membrane</keyword>
<keyword id="KW-0602">Photosynthesis</keyword>
<keyword id="KW-0934">Plastid</keyword>
<keyword id="KW-1185">Reference proteome</keyword>
<keyword id="KW-0793">Thylakoid</keyword>
<keyword id="KW-0812">Transmembrane</keyword>
<keyword id="KW-1133">Transmembrane helix</keyword>
<keyword id="KW-0813">Transport</keyword>
<sequence length="31" mass="3420">MTVAIDYFLLVGFCFAVTSGLWIGLKSIKLI</sequence>
<comment type="function">
    <text evidence="1">Component of the cytochrome b6-f complex, which mediates electron transfer between photosystem II (PSII) and photosystem I (PSI), cyclic electron flow around PSI, and state transitions. PetL is important for photoautotrophic growth as well as for electron transfer efficiency and stability of the cytochrome b6-f complex.</text>
</comment>
<comment type="subunit">
    <text evidence="1">The 4 large subunits of the cytochrome b6-f complex are cytochrome b6, subunit IV (17 kDa polypeptide, PetD), cytochrome f and the Rieske protein, while the 4 small subunits are PetG, PetL, PetM and PetN. The complex functions as a dimer.</text>
</comment>
<comment type="subcellular location">
    <subcellularLocation>
        <location evidence="1">Plastid</location>
        <location evidence="1">Chloroplast thylakoid membrane</location>
        <topology evidence="1">Single-pass membrane protein</topology>
    </subcellularLocation>
</comment>
<comment type="similarity">
    <text evidence="1">Belongs to the PetL family.</text>
</comment>
<organism>
    <name type="scientific">Phaeodactylum tricornutum (strain CCAP 1055/1)</name>
    <dbReference type="NCBI Taxonomy" id="556484"/>
    <lineage>
        <taxon>Eukaryota</taxon>
        <taxon>Sar</taxon>
        <taxon>Stramenopiles</taxon>
        <taxon>Ochrophyta</taxon>
        <taxon>Bacillariophyta</taxon>
        <taxon>Bacillariophyceae</taxon>
        <taxon>Bacillariophycidae</taxon>
        <taxon>Naviculales</taxon>
        <taxon>Phaeodactylaceae</taxon>
        <taxon>Phaeodactylum</taxon>
    </lineage>
</organism>
<gene>
    <name evidence="1" type="primary">petL</name>
</gene>